<sequence>MLNGKANADFVPEMQRFYKLFYHIDLTNEQALKLFQVK</sequence>
<organism>
    <name type="scientific">Haemophilus influenzae (strain ATCC 51907 / DSM 11121 / KW20 / Rd)</name>
    <dbReference type="NCBI Taxonomy" id="71421"/>
    <lineage>
        <taxon>Bacteria</taxon>
        <taxon>Pseudomonadati</taxon>
        <taxon>Pseudomonadota</taxon>
        <taxon>Gammaproteobacteria</taxon>
        <taxon>Pasteurellales</taxon>
        <taxon>Pasteurellaceae</taxon>
        <taxon>Haemophilus</taxon>
    </lineage>
</organism>
<proteinExistence type="predicted"/>
<gene>
    <name type="ordered locus">HI_1269</name>
</gene>
<keyword id="KW-1185">Reference proteome</keyword>
<reference key="1">
    <citation type="journal article" date="1995" name="Science">
        <title>Whole-genome random sequencing and assembly of Haemophilus influenzae Rd.</title>
        <authorList>
            <person name="Fleischmann R.D."/>
            <person name="Adams M.D."/>
            <person name="White O."/>
            <person name="Clayton R.A."/>
            <person name="Kirkness E.F."/>
            <person name="Kerlavage A.R."/>
            <person name="Bult C.J."/>
            <person name="Tomb J.-F."/>
            <person name="Dougherty B.A."/>
            <person name="Merrick J.M."/>
            <person name="McKenney K."/>
            <person name="Sutton G.G."/>
            <person name="FitzHugh W."/>
            <person name="Fields C.A."/>
            <person name="Gocayne J.D."/>
            <person name="Scott J.D."/>
            <person name="Shirley R."/>
            <person name="Liu L.-I."/>
            <person name="Glodek A."/>
            <person name="Kelley J.M."/>
            <person name="Weidman J.F."/>
            <person name="Phillips C.A."/>
            <person name="Spriggs T."/>
            <person name="Hedblom E."/>
            <person name="Cotton M.D."/>
            <person name="Utterback T.R."/>
            <person name="Hanna M.C."/>
            <person name="Nguyen D.T."/>
            <person name="Saudek D.M."/>
            <person name="Brandon R.C."/>
            <person name="Fine L.D."/>
            <person name="Fritchman J.L."/>
            <person name="Fuhrmann J.L."/>
            <person name="Geoghagen N.S.M."/>
            <person name="Gnehm C.L."/>
            <person name="McDonald L.A."/>
            <person name="Small K.V."/>
            <person name="Fraser C.M."/>
            <person name="Smith H.O."/>
            <person name="Venter J.C."/>
        </authorList>
    </citation>
    <scope>NUCLEOTIDE SEQUENCE [LARGE SCALE GENOMIC DNA]</scope>
    <source>
        <strain>ATCC 51907 / DSM 11121 / KW20 / Rd</strain>
    </source>
</reference>
<protein>
    <recommendedName>
        <fullName>Uncharacterized protein HI_1269</fullName>
    </recommendedName>
</protein>
<name>Y1269_HAEIN</name>
<accession>P44148</accession>
<feature type="chain" id="PRO_0000078019" description="Uncharacterized protein HI_1269">
    <location>
        <begin position="1"/>
        <end position="38"/>
    </location>
</feature>
<dbReference type="EMBL" id="L42023">
    <property type="protein sequence ID" value="AAC22930.1"/>
    <property type="molecule type" value="Genomic_DNA"/>
</dbReference>
<dbReference type="PIR" id="D64024">
    <property type="entry name" value="D64024"/>
</dbReference>
<dbReference type="SMR" id="P44148"/>
<dbReference type="STRING" id="71421.HI_1269"/>
<dbReference type="EnsemblBacteria" id="AAC22930">
    <property type="protein sequence ID" value="AAC22930"/>
    <property type="gene ID" value="HI_1269"/>
</dbReference>
<dbReference type="KEGG" id="hin:HI_1269"/>
<dbReference type="HOGENOM" id="CLU_3328532_0_0_6"/>
<dbReference type="Proteomes" id="UP000000579">
    <property type="component" value="Chromosome"/>
</dbReference>
<dbReference type="Gene3D" id="1.20.58.2180">
    <property type="match status" value="1"/>
</dbReference>